<reference key="1">
    <citation type="journal article" date="1996" name="Science">
        <title>Complete genome sequence of the methanogenic archaeon, Methanococcus jannaschii.</title>
        <authorList>
            <person name="Bult C.J."/>
            <person name="White O."/>
            <person name="Olsen G.J."/>
            <person name="Zhou L."/>
            <person name="Fleischmann R.D."/>
            <person name="Sutton G.G."/>
            <person name="Blake J.A."/>
            <person name="FitzGerald L.M."/>
            <person name="Clayton R.A."/>
            <person name="Gocayne J.D."/>
            <person name="Kerlavage A.R."/>
            <person name="Dougherty B.A."/>
            <person name="Tomb J.-F."/>
            <person name="Adams M.D."/>
            <person name="Reich C.I."/>
            <person name="Overbeek R."/>
            <person name="Kirkness E.F."/>
            <person name="Weinstock K.G."/>
            <person name="Merrick J.M."/>
            <person name="Glodek A."/>
            <person name="Scott J.L."/>
            <person name="Geoghagen N.S.M."/>
            <person name="Weidman J.F."/>
            <person name="Fuhrmann J.L."/>
            <person name="Nguyen D."/>
            <person name="Utterback T.R."/>
            <person name="Kelley J.M."/>
            <person name="Peterson J.D."/>
            <person name="Sadow P.W."/>
            <person name="Hanna M.C."/>
            <person name="Cotton M.D."/>
            <person name="Roberts K.M."/>
            <person name="Hurst M.A."/>
            <person name="Kaine B.P."/>
            <person name="Borodovsky M."/>
            <person name="Klenk H.-P."/>
            <person name="Fraser C.M."/>
            <person name="Smith H.O."/>
            <person name="Woese C.R."/>
            <person name="Venter J.C."/>
        </authorList>
    </citation>
    <scope>NUCLEOTIDE SEQUENCE [LARGE SCALE GENOMIC DNA]</scope>
    <source>
        <strain>ATCC 43067 / DSM 2661 / JAL-1 / JCM 10045 / NBRC 100440</strain>
    </source>
</reference>
<proteinExistence type="inferred from homology"/>
<sequence length="942" mass="110184">MMVMIDFKEIEKKWQKRWEEAKIFEANPDDREKFFITAAFPYLNGVLHAGHLRTFTIPEVVARFQRMKNKNVLWTFGYHVTGTPILGLAELIKNRDEKTIWAYTELHGIPKEELLELTTPEKIVEYFSKKAEEAFKRMGFSLDWRRNFKTDDKVFNKFIEWQFHKLKEKGLIVKGSHPVRYCPRCDNPVEDHDILVGENATLVEYILIKFTTEDGCIMPMATLRPETVFGVTNVWVNPEATYVKAKVYLEKETENGIELIENGIWIMAKECAEKLKHQDRKIEIIEEFKGEQLINKKVKNPVTGKEVPILPAKFVKTNIGTGCVMSVPAHAPYDYIALRDLGLVDEIGLIPLINVPGYGKYPAKEIVEKMGIKSQEEEDKLEEATKKIYKDEFHKGVLNENCLDYEGIPVREIKDKLTKDLIDKGLAEIMYEFSEEKVICRCGTPCIVKMVKGQWFIKYSDEKWKELAHKCIDKMRFIPENLRQVFHEKIDWMKDKACVRRRGLGTKFPFEEGWVIESLSDSTIYPAYYTVAKYINQHNIKPEQLTLELFDYVFLGKGDVDKIAKETGIPKDIIEGMRKEFIYYYPVDWRCSAKDLIPNHLTFYIFNHVAIFPEEFWPRGIVVNGYVTIEGKKLSKSKGPVLPVLEVAEKFGADVGRFYITTCAELPQDADIKFKEMENTKKVLERLYLFAKEIAERRGETGEEFSYIDKWLLSRLYKAVKQYDEYMENFELRKAGILLYQLLDDLKWYRRRGGNNIRVLEEFLEVIIKLMMPFTPHLCEEMWEILGKEGFVSLAKFPEVKEEFINDEIEKGEEYLKAVMEDIKEIINVAKVQPKRIYLYTADDWKYEILKIIKENEGKTIKELMPIIMKNPEFRKYGKEIPKLVNQLIKLNAEIINEVEVLENAKEFLKKEVGVEDIIINGEDKANKKRVAIPFKPAIYLE</sequence>
<comment type="catalytic activity">
    <reaction evidence="1">
        <text>tRNA(Leu) + L-leucine + ATP = L-leucyl-tRNA(Leu) + AMP + diphosphate</text>
        <dbReference type="Rhea" id="RHEA:11688"/>
        <dbReference type="Rhea" id="RHEA-COMP:9613"/>
        <dbReference type="Rhea" id="RHEA-COMP:9622"/>
        <dbReference type="ChEBI" id="CHEBI:30616"/>
        <dbReference type="ChEBI" id="CHEBI:33019"/>
        <dbReference type="ChEBI" id="CHEBI:57427"/>
        <dbReference type="ChEBI" id="CHEBI:78442"/>
        <dbReference type="ChEBI" id="CHEBI:78494"/>
        <dbReference type="ChEBI" id="CHEBI:456215"/>
        <dbReference type="EC" id="6.1.1.4"/>
    </reaction>
</comment>
<comment type="subcellular location">
    <subcellularLocation>
        <location evidence="1">Cytoplasm</location>
    </subcellularLocation>
</comment>
<comment type="similarity">
    <text evidence="1">Belongs to the class-I aminoacyl-tRNA synthetase family.</text>
</comment>
<name>SYL_METJA</name>
<dbReference type="EC" id="6.1.1.4" evidence="1"/>
<dbReference type="EMBL" id="L77117">
    <property type="protein sequence ID" value="AAB98628.1"/>
    <property type="molecule type" value="Genomic_DNA"/>
</dbReference>
<dbReference type="PIR" id="A64379">
    <property type="entry name" value="A64379"/>
</dbReference>
<dbReference type="SMR" id="Q58050"/>
<dbReference type="FunCoup" id="Q58050">
    <property type="interactions" value="229"/>
</dbReference>
<dbReference type="STRING" id="243232.MJ_0633"/>
<dbReference type="PaxDb" id="243232-MJ_0633"/>
<dbReference type="EnsemblBacteria" id="AAB98628">
    <property type="protein sequence ID" value="AAB98628"/>
    <property type="gene ID" value="MJ_0633"/>
</dbReference>
<dbReference type="KEGG" id="mja:MJ_0633"/>
<dbReference type="eggNOG" id="arCOG00809">
    <property type="taxonomic scope" value="Archaea"/>
</dbReference>
<dbReference type="HOGENOM" id="CLU_004174_0_0_2"/>
<dbReference type="InParanoid" id="Q58050"/>
<dbReference type="PhylomeDB" id="Q58050"/>
<dbReference type="Proteomes" id="UP000000805">
    <property type="component" value="Chromosome"/>
</dbReference>
<dbReference type="GO" id="GO:0005737">
    <property type="term" value="C:cytoplasm"/>
    <property type="evidence" value="ECO:0007669"/>
    <property type="project" value="UniProtKB-SubCell"/>
</dbReference>
<dbReference type="GO" id="GO:0002161">
    <property type="term" value="F:aminoacyl-tRNA deacylase activity"/>
    <property type="evidence" value="ECO:0007669"/>
    <property type="project" value="InterPro"/>
</dbReference>
<dbReference type="GO" id="GO:0005524">
    <property type="term" value="F:ATP binding"/>
    <property type="evidence" value="ECO:0007669"/>
    <property type="project" value="UniProtKB-UniRule"/>
</dbReference>
<dbReference type="GO" id="GO:0004823">
    <property type="term" value="F:leucine-tRNA ligase activity"/>
    <property type="evidence" value="ECO:0000318"/>
    <property type="project" value="GO_Central"/>
</dbReference>
<dbReference type="GO" id="GO:0006429">
    <property type="term" value="P:leucyl-tRNA aminoacylation"/>
    <property type="evidence" value="ECO:0000318"/>
    <property type="project" value="GO_Central"/>
</dbReference>
<dbReference type="CDD" id="cd07959">
    <property type="entry name" value="Anticodon_Ia_Leu_AEc"/>
    <property type="match status" value="1"/>
</dbReference>
<dbReference type="CDD" id="cd00812">
    <property type="entry name" value="LeuRS_core"/>
    <property type="match status" value="1"/>
</dbReference>
<dbReference type="FunFam" id="1.10.730.10:FF:000051">
    <property type="entry name" value="Leucine--tRNA ligase"/>
    <property type="match status" value="1"/>
</dbReference>
<dbReference type="FunFam" id="3.90.740.10:FF:000024">
    <property type="entry name" value="Leucine--tRNA ligase"/>
    <property type="match status" value="1"/>
</dbReference>
<dbReference type="Gene3D" id="3.30.2320.20">
    <property type="entry name" value="Class I aminoacyl-tRNA synthetases (RS)"/>
    <property type="match status" value="1"/>
</dbReference>
<dbReference type="Gene3D" id="3.40.50.620">
    <property type="entry name" value="HUPs"/>
    <property type="match status" value="1"/>
</dbReference>
<dbReference type="Gene3D" id="1.10.730.10">
    <property type="entry name" value="Isoleucyl-tRNA Synthetase, Domain 1"/>
    <property type="match status" value="1"/>
</dbReference>
<dbReference type="Gene3D" id="1.10.10.720">
    <property type="entry name" value="leucyl-tRNA synthetase"/>
    <property type="match status" value="1"/>
</dbReference>
<dbReference type="Gene3D" id="3.90.740.10">
    <property type="entry name" value="Valyl/Leucyl/Isoleucyl-tRNA synthetase, editing domain"/>
    <property type="match status" value="1"/>
</dbReference>
<dbReference type="HAMAP" id="MF_00049_A">
    <property type="entry name" value="Leu_tRNA_synth_A"/>
    <property type="match status" value="1"/>
</dbReference>
<dbReference type="InterPro" id="IPR001412">
    <property type="entry name" value="aa-tRNA-synth_I_CS"/>
</dbReference>
<dbReference type="InterPro" id="IPR002300">
    <property type="entry name" value="aa-tRNA-synth_Ia"/>
</dbReference>
<dbReference type="InterPro" id="IPR020791">
    <property type="entry name" value="Leu-tRNA-lgase_arc"/>
</dbReference>
<dbReference type="InterPro" id="IPR004493">
    <property type="entry name" value="Leu-tRNA-synth_Ia_arc/euk"/>
</dbReference>
<dbReference type="InterPro" id="IPR013155">
    <property type="entry name" value="M/V/L/I-tRNA-synth_anticd-bd"/>
</dbReference>
<dbReference type="InterPro" id="IPR014729">
    <property type="entry name" value="Rossmann-like_a/b/a_fold"/>
</dbReference>
<dbReference type="InterPro" id="IPR009080">
    <property type="entry name" value="tRNAsynth_Ia_anticodon-bd"/>
</dbReference>
<dbReference type="InterPro" id="IPR009008">
    <property type="entry name" value="Val/Leu/Ile-tRNA-synth_edit"/>
</dbReference>
<dbReference type="NCBIfam" id="TIGR00395">
    <property type="entry name" value="leuS_arch"/>
    <property type="match status" value="1"/>
</dbReference>
<dbReference type="NCBIfam" id="NF008957">
    <property type="entry name" value="PRK12300.1"/>
    <property type="match status" value="1"/>
</dbReference>
<dbReference type="PANTHER" id="PTHR45794:SF1">
    <property type="entry name" value="LEUCINE--TRNA LIGASE, CYTOPLASMIC"/>
    <property type="match status" value="1"/>
</dbReference>
<dbReference type="PANTHER" id="PTHR45794">
    <property type="entry name" value="LEUCYL-TRNA SYNTHETASE"/>
    <property type="match status" value="1"/>
</dbReference>
<dbReference type="Pfam" id="PF08264">
    <property type="entry name" value="Anticodon_1"/>
    <property type="match status" value="1"/>
</dbReference>
<dbReference type="Pfam" id="PF00133">
    <property type="entry name" value="tRNA-synt_1"/>
    <property type="match status" value="1"/>
</dbReference>
<dbReference type="SUPFAM" id="SSF47323">
    <property type="entry name" value="Anticodon-binding domain of a subclass of class I aminoacyl-tRNA synthetases"/>
    <property type="match status" value="1"/>
</dbReference>
<dbReference type="SUPFAM" id="SSF52374">
    <property type="entry name" value="Nucleotidylyl transferase"/>
    <property type="match status" value="1"/>
</dbReference>
<dbReference type="SUPFAM" id="SSF50677">
    <property type="entry name" value="ValRS/IleRS/LeuRS editing domain"/>
    <property type="match status" value="1"/>
</dbReference>
<dbReference type="PROSITE" id="PS00178">
    <property type="entry name" value="AA_TRNA_LIGASE_I"/>
    <property type="match status" value="1"/>
</dbReference>
<accession>Q58050</accession>
<protein>
    <recommendedName>
        <fullName evidence="1">Leucine--tRNA ligase</fullName>
        <ecNumber evidence="1">6.1.1.4</ecNumber>
    </recommendedName>
    <alternativeName>
        <fullName evidence="1">Leucyl-tRNA synthetase</fullName>
        <shortName evidence="1">LeuRS</shortName>
    </alternativeName>
</protein>
<feature type="chain" id="PRO_0000152131" description="Leucine--tRNA ligase">
    <location>
        <begin position="1"/>
        <end position="942"/>
    </location>
</feature>
<feature type="short sequence motif" description="'HIGH' region">
    <location>
        <begin position="41"/>
        <end position="51"/>
    </location>
</feature>
<feature type="short sequence motif" description="'KMSKS' region">
    <location>
        <begin position="633"/>
        <end position="637"/>
    </location>
</feature>
<feature type="binding site" evidence="1">
    <location>
        <position position="636"/>
    </location>
    <ligand>
        <name>ATP</name>
        <dbReference type="ChEBI" id="CHEBI:30616"/>
    </ligand>
</feature>
<organism>
    <name type="scientific">Methanocaldococcus jannaschii (strain ATCC 43067 / DSM 2661 / JAL-1 / JCM 10045 / NBRC 100440)</name>
    <name type="common">Methanococcus jannaschii</name>
    <dbReference type="NCBI Taxonomy" id="243232"/>
    <lineage>
        <taxon>Archaea</taxon>
        <taxon>Methanobacteriati</taxon>
        <taxon>Methanobacteriota</taxon>
        <taxon>Methanomada group</taxon>
        <taxon>Methanococci</taxon>
        <taxon>Methanococcales</taxon>
        <taxon>Methanocaldococcaceae</taxon>
        <taxon>Methanocaldococcus</taxon>
    </lineage>
</organism>
<gene>
    <name evidence="1" type="primary">leuS</name>
    <name type="ordered locus">MJ0633</name>
</gene>
<keyword id="KW-0030">Aminoacyl-tRNA synthetase</keyword>
<keyword id="KW-0067">ATP-binding</keyword>
<keyword id="KW-0963">Cytoplasm</keyword>
<keyword id="KW-0436">Ligase</keyword>
<keyword id="KW-0547">Nucleotide-binding</keyword>
<keyword id="KW-0648">Protein biosynthesis</keyword>
<keyword id="KW-1185">Reference proteome</keyword>
<evidence type="ECO:0000255" key="1">
    <source>
        <dbReference type="HAMAP-Rule" id="MF_00049"/>
    </source>
</evidence>